<keyword id="KW-0963">Cytoplasm</keyword>
<keyword id="KW-0489">Methyltransferase</keyword>
<keyword id="KW-0698">rRNA processing</keyword>
<keyword id="KW-0949">S-adenosyl-L-methionine</keyword>
<keyword id="KW-0808">Transferase</keyword>
<feature type="chain" id="PRO_0000333321" description="Ribosomal RNA large subunit methyltransferase E">
    <location>
        <begin position="1"/>
        <end position="226"/>
    </location>
</feature>
<feature type="active site" description="Proton acceptor" evidence="1">
    <location>
        <position position="180"/>
    </location>
</feature>
<feature type="binding site" evidence="1">
    <location>
        <position position="82"/>
    </location>
    <ligand>
        <name>S-adenosyl-L-methionine</name>
        <dbReference type="ChEBI" id="CHEBI:59789"/>
    </ligand>
</feature>
<feature type="binding site" evidence="1">
    <location>
        <position position="84"/>
    </location>
    <ligand>
        <name>S-adenosyl-L-methionine</name>
        <dbReference type="ChEBI" id="CHEBI:59789"/>
    </ligand>
</feature>
<feature type="binding site" evidence="1">
    <location>
        <position position="100"/>
    </location>
    <ligand>
        <name>S-adenosyl-L-methionine</name>
        <dbReference type="ChEBI" id="CHEBI:59789"/>
    </ligand>
</feature>
<feature type="binding site" evidence="1">
    <location>
        <position position="116"/>
    </location>
    <ligand>
        <name>S-adenosyl-L-methionine</name>
        <dbReference type="ChEBI" id="CHEBI:59789"/>
    </ligand>
</feature>
<feature type="binding site" evidence="1">
    <location>
        <position position="140"/>
    </location>
    <ligand>
        <name>S-adenosyl-L-methionine</name>
        <dbReference type="ChEBI" id="CHEBI:59789"/>
    </ligand>
</feature>
<gene>
    <name evidence="1" type="primary">rlmE</name>
    <name evidence="1" type="synonym">ftsJ</name>
    <name evidence="1" type="synonym">rrmJ</name>
    <name type="ordered locus">Caul_2211</name>
</gene>
<evidence type="ECO:0000255" key="1">
    <source>
        <dbReference type="HAMAP-Rule" id="MF_01547"/>
    </source>
</evidence>
<evidence type="ECO:0000305" key="2"/>
<proteinExistence type="inferred from homology"/>
<dbReference type="EC" id="2.1.1.166" evidence="1"/>
<dbReference type="EMBL" id="CP000927">
    <property type="protein sequence ID" value="ABZ71339.1"/>
    <property type="status" value="ALT_INIT"/>
    <property type="molecule type" value="Genomic_DNA"/>
</dbReference>
<dbReference type="SMR" id="B0T8J6"/>
<dbReference type="STRING" id="366602.Caul_2211"/>
<dbReference type="KEGG" id="cak:Caul_2211"/>
<dbReference type="eggNOG" id="COG0293">
    <property type="taxonomic scope" value="Bacteria"/>
</dbReference>
<dbReference type="HOGENOM" id="CLU_009422_4_0_5"/>
<dbReference type="OrthoDB" id="9790080at2"/>
<dbReference type="GO" id="GO:0005737">
    <property type="term" value="C:cytoplasm"/>
    <property type="evidence" value="ECO:0007669"/>
    <property type="project" value="UniProtKB-SubCell"/>
</dbReference>
<dbReference type="GO" id="GO:0008650">
    <property type="term" value="F:rRNA (uridine-2'-O-)-methyltransferase activity"/>
    <property type="evidence" value="ECO:0007669"/>
    <property type="project" value="UniProtKB-UniRule"/>
</dbReference>
<dbReference type="Gene3D" id="3.40.50.150">
    <property type="entry name" value="Vaccinia Virus protein VP39"/>
    <property type="match status" value="1"/>
</dbReference>
<dbReference type="HAMAP" id="MF_01547">
    <property type="entry name" value="RNA_methyltr_E"/>
    <property type="match status" value="1"/>
</dbReference>
<dbReference type="InterPro" id="IPR050082">
    <property type="entry name" value="RNA_methyltr_RlmE"/>
</dbReference>
<dbReference type="InterPro" id="IPR002877">
    <property type="entry name" value="RNA_MeTrfase_FtsJ_dom"/>
</dbReference>
<dbReference type="InterPro" id="IPR015507">
    <property type="entry name" value="rRNA-MeTfrase_E"/>
</dbReference>
<dbReference type="InterPro" id="IPR029063">
    <property type="entry name" value="SAM-dependent_MTases_sf"/>
</dbReference>
<dbReference type="PANTHER" id="PTHR10920">
    <property type="entry name" value="RIBOSOMAL RNA METHYLTRANSFERASE"/>
    <property type="match status" value="1"/>
</dbReference>
<dbReference type="PANTHER" id="PTHR10920:SF18">
    <property type="entry name" value="RRNA METHYLTRANSFERASE 2, MITOCHONDRIAL"/>
    <property type="match status" value="1"/>
</dbReference>
<dbReference type="Pfam" id="PF01728">
    <property type="entry name" value="FtsJ"/>
    <property type="match status" value="1"/>
</dbReference>
<dbReference type="PIRSF" id="PIRSF005461">
    <property type="entry name" value="23S_rRNA_mtase"/>
    <property type="match status" value="1"/>
</dbReference>
<dbReference type="SUPFAM" id="SSF53335">
    <property type="entry name" value="S-adenosyl-L-methionine-dependent methyltransferases"/>
    <property type="match status" value="1"/>
</dbReference>
<accession>B0T8J6</accession>
<sequence length="226" mass="24280">MVKPPAGGNDGGRAKPARLKTAFGRTPSQQAWLERQINDPFSAKARALGYRSRAAFKISEIDDKYRFFKKGAKVIDLGCAPGGWLQMATERGVTDIVGVDLLPVDPVAPAHILEMDFTDPACPPKMLELLGGAPDLVMSDMAPNTVGHRETDHLRIVGLIEIGADFAIEVLKPGGAFVAKAFQGGETAAVIAQLKKHFTKVVHFKPKASRSDSSEVFLVATGFKGR</sequence>
<organism>
    <name type="scientific">Caulobacter sp. (strain K31)</name>
    <dbReference type="NCBI Taxonomy" id="366602"/>
    <lineage>
        <taxon>Bacteria</taxon>
        <taxon>Pseudomonadati</taxon>
        <taxon>Pseudomonadota</taxon>
        <taxon>Alphaproteobacteria</taxon>
        <taxon>Caulobacterales</taxon>
        <taxon>Caulobacteraceae</taxon>
        <taxon>Caulobacter</taxon>
    </lineage>
</organism>
<protein>
    <recommendedName>
        <fullName evidence="1">Ribosomal RNA large subunit methyltransferase E</fullName>
        <ecNumber evidence="1">2.1.1.166</ecNumber>
    </recommendedName>
    <alternativeName>
        <fullName evidence="1">23S rRNA Um2552 methyltransferase</fullName>
    </alternativeName>
    <alternativeName>
        <fullName evidence="1">rRNA (uridine-2'-O-)-methyltransferase</fullName>
    </alternativeName>
</protein>
<comment type="function">
    <text evidence="1">Specifically methylates the uridine in position 2552 of 23S rRNA at the 2'-O position of the ribose in the fully assembled 50S ribosomal subunit.</text>
</comment>
<comment type="catalytic activity">
    <reaction evidence="1">
        <text>uridine(2552) in 23S rRNA + S-adenosyl-L-methionine = 2'-O-methyluridine(2552) in 23S rRNA + S-adenosyl-L-homocysteine + H(+)</text>
        <dbReference type="Rhea" id="RHEA:42720"/>
        <dbReference type="Rhea" id="RHEA-COMP:10202"/>
        <dbReference type="Rhea" id="RHEA-COMP:10203"/>
        <dbReference type="ChEBI" id="CHEBI:15378"/>
        <dbReference type="ChEBI" id="CHEBI:57856"/>
        <dbReference type="ChEBI" id="CHEBI:59789"/>
        <dbReference type="ChEBI" id="CHEBI:65315"/>
        <dbReference type="ChEBI" id="CHEBI:74478"/>
        <dbReference type="EC" id="2.1.1.166"/>
    </reaction>
</comment>
<comment type="subcellular location">
    <subcellularLocation>
        <location evidence="1">Cytoplasm</location>
    </subcellularLocation>
</comment>
<comment type="similarity">
    <text evidence="1">Belongs to the class I-like SAM-binding methyltransferase superfamily. RNA methyltransferase RlmE family.</text>
</comment>
<comment type="sequence caution" evidence="2">
    <conflict type="erroneous initiation">
        <sequence resource="EMBL-CDS" id="ABZ71339"/>
    </conflict>
</comment>
<reference key="1">
    <citation type="submission" date="2008-01" db="EMBL/GenBank/DDBJ databases">
        <title>Complete sequence of chromosome of Caulobacter sp. K31.</title>
        <authorList>
            <consortium name="US DOE Joint Genome Institute"/>
            <person name="Copeland A."/>
            <person name="Lucas S."/>
            <person name="Lapidus A."/>
            <person name="Barry K."/>
            <person name="Glavina del Rio T."/>
            <person name="Dalin E."/>
            <person name="Tice H."/>
            <person name="Pitluck S."/>
            <person name="Bruce D."/>
            <person name="Goodwin L."/>
            <person name="Thompson L.S."/>
            <person name="Brettin T."/>
            <person name="Detter J.C."/>
            <person name="Han C."/>
            <person name="Schmutz J."/>
            <person name="Larimer F."/>
            <person name="Land M."/>
            <person name="Hauser L."/>
            <person name="Kyrpides N."/>
            <person name="Kim E."/>
            <person name="Stephens C."/>
            <person name="Richardson P."/>
        </authorList>
    </citation>
    <scope>NUCLEOTIDE SEQUENCE [LARGE SCALE GENOMIC DNA]</scope>
    <source>
        <strain>K31</strain>
    </source>
</reference>
<name>RLME_CAUSK</name>